<sequence>MKHIRNFSIIAHIDHGKSTLSDRLIQVCGGLSDREMAAQVLDSMDLERERGITIKSQSVTLNYTAKDGETYQLNFIDTPGHVDFAYEVSRSLAACEGALLVVDAGQGVEAQTLANCYTAIEMDLEVVPILNKIDLPAADPERVAEEIEEIVGIDAMDATRCSAKTGLGVEDVLENIVSAIPAPEGDPDAPLQALIIDSWFDNYLGVVSLVRIKNGSLKKNDKIKVMSTGQAWGVDRLGIFTPKQVDTDVLNTGEVGWVVCGIKDILGAPVGDTLTLAKNGSDKPLPGFKKVKPQVYAGLFPVSSDDYENFRDALGKLSLNDASLFYEPENSAALGFGFRCGFLGMLHMEIIQERLEREYDLDLITTAPTVVYEVEKTDGELLYVDSPAKLPAINDIEEIREPIARCNILVPSDYLGNVITLCVEKRGLQVDMVYHGNQVAVTYDIPMAEVVLDFFDRLKSTSRGYASLDYNFQRFEASNMVRVDVLLNGDKVDALALITHKDQSQTRGRQLVEKMKEFIPRQMFDIAIQAAIGNHIIARSTVKQLRKNVIAKCYGGDVSRKKKLLKKQKEGKKRMKQIGNVELPQEAFLAILHVGKD</sequence>
<feature type="chain" id="PRO_0000176371" description="Elongation factor 4">
    <location>
        <begin position="1"/>
        <end position="597"/>
    </location>
</feature>
<feature type="domain" description="tr-type G">
    <location>
        <begin position="2"/>
        <end position="184"/>
    </location>
</feature>
<feature type="binding site" evidence="1">
    <location>
        <begin position="14"/>
        <end position="19"/>
    </location>
    <ligand>
        <name>GTP</name>
        <dbReference type="ChEBI" id="CHEBI:37565"/>
    </ligand>
</feature>
<feature type="binding site" evidence="1">
    <location>
        <begin position="131"/>
        <end position="134"/>
    </location>
    <ligand>
        <name>GTP</name>
        <dbReference type="ChEBI" id="CHEBI:37565"/>
    </ligand>
</feature>
<comment type="function">
    <text evidence="1">Required for accurate and efficient protein synthesis under certain stress conditions. May act as a fidelity factor of the translation reaction, by catalyzing a one-codon backward translocation of tRNAs on improperly translocated ribosomes. Back-translocation proceeds from a post-translocation (POST) complex to a pre-translocation (PRE) complex, thus giving elongation factor G a second chance to translocate the tRNAs correctly. Binds to ribosomes in a GTP-dependent manner.</text>
</comment>
<comment type="catalytic activity">
    <reaction evidence="1">
        <text>GTP + H2O = GDP + phosphate + H(+)</text>
        <dbReference type="Rhea" id="RHEA:19669"/>
        <dbReference type="ChEBI" id="CHEBI:15377"/>
        <dbReference type="ChEBI" id="CHEBI:15378"/>
        <dbReference type="ChEBI" id="CHEBI:37565"/>
        <dbReference type="ChEBI" id="CHEBI:43474"/>
        <dbReference type="ChEBI" id="CHEBI:58189"/>
        <dbReference type="EC" id="3.6.5.n1"/>
    </reaction>
</comment>
<comment type="subcellular location">
    <subcellularLocation>
        <location evidence="1">Cell inner membrane</location>
        <topology evidence="1">Peripheral membrane protein</topology>
        <orientation evidence="1">Cytoplasmic side</orientation>
    </subcellularLocation>
</comment>
<comment type="similarity">
    <text evidence="1">Belongs to the TRAFAC class translation factor GTPase superfamily. Classic translation factor GTPase family. LepA subfamily.</text>
</comment>
<gene>
    <name evidence="1" type="primary">lepA</name>
    <name type="ordered locus">VP2574</name>
</gene>
<evidence type="ECO:0000255" key="1">
    <source>
        <dbReference type="HAMAP-Rule" id="MF_00071"/>
    </source>
</evidence>
<protein>
    <recommendedName>
        <fullName evidence="1">Elongation factor 4</fullName>
        <shortName evidence="1">EF-4</shortName>
        <ecNumber evidence="1">3.6.5.n1</ecNumber>
    </recommendedName>
    <alternativeName>
        <fullName evidence="1">Ribosomal back-translocase LepA</fullName>
    </alternativeName>
</protein>
<proteinExistence type="inferred from homology"/>
<organism>
    <name type="scientific">Vibrio parahaemolyticus serotype O3:K6 (strain RIMD 2210633)</name>
    <dbReference type="NCBI Taxonomy" id="223926"/>
    <lineage>
        <taxon>Bacteria</taxon>
        <taxon>Pseudomonadati</taxon>
        <taxon>Pseudomonadota</taxon>
        <taxon>Gammaproteobacteria</taxon>
        <taxon>Vibrionales</taxon>
        <taxon>Vibrionaceae</taxon>
        <taxon>Vibrio</taxon>
    </lineage>
</organism>
<dbReference type="EC" id="3.6.5.n1" evidence="1"/>
<dbReference type="EMBL" id="BA000031">
    <property type="protein sequence ID" value="BAC60837.1"/>
    <property type="molecule type" value="Genomic_DNA"/>
</dbReference>
<dbReference type="RefSeq" id="NP_798953.1">
    <property type="nucleotide sequence ID" value="NC_004603.1"/>
</dbReference>
<dbReference type="RefSeq" id="WP_005460681.1">
    <property type="nucleotide sequence ID" value="NC_004603.1"/>
</dbReference>
<dbReference type="SMR" id="Q87LN7"/>
<dbReference type="GeneID" id="1190098"/>
<dbReference type="KEGG" id="vpa:VP2574"/>
<dbReference type="PATRIC" id="fig|223926.6.peg.2472"/>
<dbReference type="eggNOG" id="COG0481">
    <property type="taxonomic scope" value="Bacteria"/>
</dbReference>
<dbReference type="HOGENOM" id="CLU_009995_3_3_6"/>
<dbReference type="Proteomes" id="UP000002493">
    <property type="component" value="Chromosome 1"/>
</dbReference>
<dbReference type="GO" id="GO:0005886">
    <property type="term" value="C:plasma membrane"/>
    <property type="evidence" value="ECO:0007669"/>
    <property type="project" value="UniProtKB-SubCell"/>
</dbReference>
<dbReference type="GO" id="GO:0005525">
    <property type="term" value="F:GTP binding"/>
    <property type="evidence" value="ECO:0007669"/>
    <property type="project" value="UniProtKB-UniRule"/>
</dbReference>
<dbReference type="GO" id="GO:0003924">
    <property type="term" value="F:GTPase activity"/>
    <property type="evidence" value="ECO:0007669"/>
    <property type="project" value="UniProtKB-UniRule"/>
</dbReference>
<dbReference type="GO" id="GO:0097216">
    <property type="term" value="F:guanosine tetraphosphate binding"/>
    <property type="evidence" value="ECO:0007669"/>
    <property type="project" value="UniProtKB-ARBA"/>
</dbReference>
<dbReference type="GO" id="GO:0043022">
    <property type="term" value="F:ribosome binding"/>
    <property type="evidence" value="ECO:0007669"/>
    <property type="project" value="UniProtKB-UniRule"/>
</dbReference>
<dbReference type="GO" id="GO:0003746">
    <property type="term" value="F:translation elongation factor activity"/>
    <property type="evidence" value="ECO:0007669"/>
    <property type="project" value="UniProtKB-UniRule"/>
</dbReference>
<dbReference type="GO" id="GO:0045727">
    <property type="term" value="P:positive regulation of translation"/>
    <property type="evidence" value="ECO:0007669"/>
    <property type="project" value="UniProtKB-UniRule"/>
</dbReference>
<dbReference type="CDD" id="cd03699">
    <property type="entry name" value="EF4_II"/>
    <property type="match status" value="1"/>
</dbReference>
<dbReference type="CDD" id="cd16260">
    <property type="entry name" value="EF4_III"/>
    <property type="match status" value="1"/>
</dbReference>
<dbReference type="CDD" id="cd01890">
    <property type="entry name" value="LepA"/>
    <property type="match status" value="1"/>
</dbReference>
<dbReference type="CDD" id="cd03709">
    <property type="entry name" value="lepA_C"/>
    <property type="match status" value="1"/>
</dbReference>
<dbReference type="FunFam" id="3.40.50.300:FF:000078">
    <property type="entry name" value="Elongation factor 4"/>
    <property type="match status" value="1"/>
</dbReference>
<dbReference type="FunFam" id="2.40.30.10:FF:000015">
    <property type="entry name" value="Translation factor GUF1, mitochondrial"/>
    <property type="match status" value="1"/>
</dbReference>
<dbReference type="FunFam" id="3.30.70.240:FF:000007">
    <property type="entry name" value="Translation factor GUF1, mitochondrial"/>
    <property type="match status" value="1"/>
</dbReference>
<dbReference type="FunFam" id="3.30.70.2570:FF:000001">
    <property type="entry name" value="Translation factor GUF1, mitochondrial"/>
    <property type="match status" value="1"/>
</dbReference>
<dbReference type="FunFam" id="3.30.70.870:FF:000004">
    <property type="entry name" value="Translation factor GUF1, mitochondrial"/>
    <property type="match status" value="1"/>
</dbReference>
<dbReference type="Gene3D" id="3.30.70.240">
    <property type="match status" value="1"/>
</dbReference>
<dbReference type="Gene3D" id="3.30.70.2570">
    <property type="entry name" value="Elongation factor 4, C-terminal domain"/>
    <property type="match status" value="1"/>
</dbReference>
<dbReference type="Gene3D" id="3.30.70.870">
    <property type="entry name" value="Elongation Factor G (Translational Gtpase), domain 3"/>
    <property type="match status" value="1"/>
</dbReference>
<dbReference type="Gene3D" id="3.40.50.300">
    <property type="entry name" value="P-loop containing nucleotide triphosphate hydrolases"/>
    <property type="match status" value="1"/>
</dbReference>
<dbReference type="Gene3D" id="2.40.30.10">
    <property type="entry name" value="Translation factors"/>
    <property type="match status" value="1"/>
</dbReference>
<dbReference type="HAMAP" id="MF_00071">
    <property type="entry name" value="LepA"/>
    <property type="match status" value="1"/>
</dbReference>
<dbReference type="InterPro" id="IPR006297">
    <property type="entry name" value="EF-4"/>
</dbReference>
<dbReference type="InterPro" id="IPR035647">
    <property type="entry name" value="EFG_III/V"/>
</dbReference>
<dbReference type="InterPro" id="IPR000640">
    <property type="entry name" value="EFG_V-like"/>
</dbReference>
<dbReference type="InterPro" id="IPR004161">
    <property type="entry name" value="EFTu-like_2"/>
</dbReference>
<dbReference type="InterPro" id="IPR031157">
    <property type="entry name" value="G_TR_CS"/>
</dbReference>
<dbReference type="InterPro" id="IPR038363">
    <property type="entry name" value="LepA_C_sf"/>
</dbReference>
<dbReference type="InterPro" id="IPR013842">
    <property type="entry name" value="LepA_CTD"/>
</dbReference>
<dbReference type="InterPro" id="IPR035654">
    <property type="entry name" value="LepA_IV"/>
</dbReference>
<dbReference type="InterPro" id="IPR027417">
    <property type="entry name" value="P-loop_NTPase"/>
</dbReference>
<dbReference type="InterPro" id="IPR005225">
    <property type="entry name" value="Small_GTP-bd"/>
</dbReference>
<dbReference type="InterPro" id="IPR000795">
    <property type="entry name" value="T_Tr_GTP-bd_dom"/>
</dbReference>
<dbReference type="InterPro" id="IPR009000">
    <property type="entry name" value="Transl_B-barrel_sf"/>
</dbReference>
<dbReference type="NCBIfam" id="TIGR01393">
    <property type="entry name" value="lepA"/>
    <property type="match status" value="1"/>
</dbReference>
<dbReference type="NCBIfam" id="TIGR00231">
    <property type="entry name" value="small_GTP"/>
    <property type="match status" value="1"/>
</dbReference>
<dbReference type="PANTHER" id="PTHR43512:SF4">
    <property type="entry name" value="TRANSLATION FACTOR GUF1 HOMOLOG, CHLOROPLASTIC"/>
    <property type="match status" value="1"/>
</dbReference>
<dbReference type="PANTHER" id="PTHR43512">
    <property type="entry name" value="TRANSLATION FACTOR GUF1-RELATED"/>
    <property type="match status" value="1"/>
</dbReference>
<dbReference type="Pfam" id="PF00679">
    <property type="entry name" value="EFG_C"/>
    <property type="match status" value="1"/>
</dbReference>
<dbReference type="Pfam" id="PF00009">
    <property type="entry name" value="GTP_EFTU"/>
    <property type="match status" value="1"/>
</dbReference>
<dbReference type="Pfam" id="PF03144">
    <property type="entry name" value="GTP_EFTU_D2"/>
    <property type="match status" value="1"/>
</dbReference>
<dbReference type="Pfam" id="PF06421">
    <property type="entry name" value="LepA_C"/>
    <property type="match status" value="1"/>
</dbReference>
<dbReference type="PRINTS" id="PR00315">
    <property type="entry name" value="ELONGATNFCT"/>
</dbReference>
<dbReference type="SMART" id="SM00838">
    <property type="entry name" value="EFG_C"/>
    <property type="match status" value="1"/>
</dbReference>
<dbReference type="SUPFAM" id="SSF54980">
    <property type="entry name" value="EF-G C-terminal domain-like"/>
    <property type="match status" value="2"/>
</dbReference>
<dbReference type="SUPFAM" id="SSF52540">
    <property type="entry name" value="P-loop containing nucleoside triphosphate hydrolases"/>
    <property type="match status" value="1"/>
</dbReference>
<dbReference type="SUPFAM" id="SSF50447">
    <property type="entry name" value="Translation proteins"/>
    <property type="match status" value="1"/>
</dbReference>
<dbReference type="PROSITE" id="PS00301">
    <property type="entry name" value="G_TR_1"/>
    <property type="match status" value="1"/>
</dbReference>
<dbReference type="PROSITE" id="PS51722">
    <property type="entry name" value="G_TR_2"/>
    <property type="match status" value="1"/>
</dbReference>
<name>LEPA_VIBPA</name>
<reference key="1">
    <citation type="journal article" date="2003" name="Lancet">
        <title>Genome sequence of Vibrio parahaemolyticus: a pathogenic mechanism distinct from that of V. cholerae.</title>
        <authorList>
            <person name="Makino K."/>
            <person name="Oshima K."/>
            <person name="Kurokawa K."/>
            <person name="Yokoyama K."/>
            <person name="Uda T."/>
            <person name="Tagomori K."/>
            <person name="Iijima Y."/>
            <person name="Najima M."/>
            <person name="Nakano M."/>
            <person name="Yamashita A."/>
            <person name="Kubota Y."/>
            <person name="Kimura S."/>
            <person name="Yasunaga T."/>
            <person name="Honda T."/>
            <person name="Shinagawa H."/>
            <person name="Hattori M."/>
            <person name="Iida T."/>
        </authorList>
    </citation>
    <scope>NUCLEOTIDE SEQUENCE [LARGE SCALE GENOMIC DNA]</scope>
    <source>
        <strain>RIMD 2210633</strain>
    </source>
</reference>
<accession>Q87LN7</accession>
<keyword id="KW-0997">Cell inner membrane</keyword>
<keyword id="KW-1003">Cell membrane</keyword>
<keyword id="KW-0342">GTP-binding</keyword>
<keyword id="KW-0378">Hydrolase</keyword>
<keyword id="KW-0472">Membrane</keyword>
<keyword id="KW-0547">Nucleotide-binding</keyword>
<keyword id="KW-0648">Protein biosynthesis</keyword>